<reference key="1">
    <citation type="journal article" date="1985" name="Gene">
        <title>Characterized full-length and truncated plasmid clones of the crystal protein of Bacillus thuringiensis subsp. kurstaki HD-73 and their toxicity to Manduca sexta.</title>
        <authorList>
            <person name="Adang M.J."/>
            <person name="Staver M.J."/>
            <person name="Rocheleau T.A."/>
            <person name="Leighton J."/>
            <person name="Barker R.F."/>
            <person name="Thompson D.V."/>
        </authorList>
    </citation>
    <scope>NUCLEOTIDE SEQUENCE [GENOMIC DNA]</scope>
    <source>
        <strain>ATCC 35866 / NRRL B-4488 / HD-73</strain>
    </source>
</reference>
<reference key="2">
    <citation type="journal article" date="1997" name="Curr. Microbiol.">
        <title>Cloning and expression of a Bacillus thuringiensis (L1-2) gene encoding a crystal protein active against Glossina morsitans morsitans and Chilo partellus.</title>
        <authorList>
            <person name="Omolo E.O."/>
            <person name="James M.D."/>
            <person name="Osir E.O."/>
            <person name="Thomson J.A."/>
        </authorList>
    </citation>
    <scope>NUCLEOTIDE SEQUENCE [GENOMIC DNA]</scope>
    <source>
        <strain>ATCC 35866 / NRRL B-4488 / HD-73</strain>
    </source>
</reference>
<reference key="3">
    <citation type="submission" date="1997-01" db="EMBL/GenBank/DDBJ databases">
        <authorList>
            <person name="Herrera G."/>
            <person name="James M.D."/>
        </authorList>
    </citation>
    <scope>NUCLEOTIDE SEQUENCE [GENOMIC DNA]</scope>
    <source>
        <strain>ATCC 35866 / NRRL B-4488 / HD-73</strain>
    </source>
</reference>
<reference key="4">
    <citation type="journal article" date="1992" name="N. Z. J. Crop Hortic. Sci.">
        <title>Cloning and nucleotide sequence of an insecticidal crystal protein gene from Bacillus thuringiensis DSIR732 active against 3 species of leafroller (Lepidoptera, Tortricidae).</title>
        <authorList>
            <person name="Gleave A.P."/>
            <person name="Hedges R.J."/>
            <person name="Broadwell A.H."/>
            <person name="Wigley P.J."/>
        </authorList>
    </citation>
    <scope>NUCLEOTIDE SEQUENCE [GENOMIC DNA]</scope>
    <source>
        <strain>DSIR732</strain>
    </source>
</reference>
<reference key="5">
    <citation type="submission" date="1997-10" db="EMBL/GenBank/DDBJ databases">
        <authorList>
            <person name="Sun M."/>
            <person name="Yu Z."/>
        </authorList>
    </citation>
    <scope>NUCLEOTIDE SEQUENCE [GENOMIC DNA]</scope>
    <source>
        <strain>YBT-1520</strain>
    </source>
</reference>
<protein>
    <recommendedName>
        <fullName>Pesticidal crystal protein Cry1Ac</fullName>
    </recommendedName>
    <alternativeName>
        <fullName>133 kDa crystal protein</fullName>
    </alternativeName>
    <alternativeName>
        <fullName>Crystaline entomocidal protoxin</fullName>
    </alternativeName>
    <alternativeName>
        <fullName>Insecticidal delta-endotoxin CryIA(c)</fullName>
    </alternativeName>
</protein>
<comment type="function">
    <text>Promotes colloidosmotic lysis by binding to the midgut epithelial cells of many lepidopteran larvae.</text>
</comment>
<comment type="developmental stage">
    <text>The crystal protein is produced during sporulation and is accumulated both as an inclusion and as part of the spore coat.</text>
</comment>
<comment type="biotechnology">
    <text>Introduced by genetic manipulation and expressed in insect-resistant cotton and tomato by Calgene (Monsanto) and in maize by Dekalb Genetics.</text>
</comment>
<comment type="miscellaneous">
    <text>Toxic segment of the protein is located in the N-terminus.</text>
</comment>
<comment type="similarity">
    <text evidence="1">Belongs to the delta endotoxin family.</text>
</comment>
<accession>P05068</accession>
<proteinExistence type="evidence at protein level"/>
<gene>
    <name type="primary">cry1Ac</name>
    <name type="synonym">cry1A(c)</name>
    <name type="synonym">cry218</name>
    <name type="synonym">cryIA(c)</name>
</gene>
<name>CR1AC_BACTK</name>
<keyword id="KW-0002">3D-structure</keyword>
<keyword id="KW-0308">Genetically modified food</keyword>
<keyword id="KW-0614">Plasmid</keyword>
<keyword id="KW-0749">Sporulation</keyword>
<keyword id="KW-0800">Toxin</keyword>
<keyword id="KW-0843">Virulence</keyword>
<sequence>MDNNPNINECIPYNCLSNPEVEVLGGERIETGYTPIDISLSLTQFLLSEFVPGAGFVLGLVDIIWGIFGPSQWDAFLVQIEQLINQRIEEFARNQAISRLEGLSNLYQIYAESFREWEADPTNPALREEMRIQFNDMNSALTTAIPLFAVQNYQVPLLSVYVQAANLHLSVLRDVSVFGQRWGFDAATINSRYNDLTRLIGNYTDYAVRWYNTGLERVWGPDSRDWVRYNQFRRELTLTVLDIVALFPNYDSRRYPIRTVSQLTREIYTNPVLENFDGSFRGSAQGIERSIRSPHLMDILNSITIYTDAHRGYYYWSGHQIMASPVGFSGPEFTFPLYGTMGNAAPQQRIVAQLGQGVYRTLSSTLYRRPFNIGINNQQLSVLDGTEFAYGTSSNLPSAVYRKSGTVDSLDEIPPQNNNVPPRQGFSHRLSHVSMFRSGFSNSSVSIIRAPMFSWIHRSAEFNNIIASDSITQIPAVKGNFLFNGSVISGPGFTGGDLVRLNSSGNNIQNRGYIEVPIHFPSTSTRYRVRVRYASVTPIHLNVNWGNSSIFSNTVPATATSLDNLQSSDFGYFESANAFTSSLGNIVGVRNFSGTAGVIIDRFEFIPVTATLEAEYNLERAQKAVNALFTSTNQLGLKTNVTDYHIDQVSNLVTYLSDEFCLDEKRELSEKVKHAKRLSDERNLLQDSNFKDINRQPERGWGGSTGITIQGGDDVFKENYVTLSGTFDECYPTYLYQKIDESKLKAFTRYQLRGYIEDSQDLEIYLIRYNAKHETVNVPGTGSLWPLSAQSPIGKCGEPNRCAPHLEWNPDLDCSCRDGEKCAHHSHHFSLDIDVGCTDLNEDLGVWVIFKIKTQDGHARLGNLEFLEEKPLVGEALARVKRAEKKWRDKREKLEWETNIVYKEAKESVDALFVNSQYDQLQADTNIAMIHAADKRVHSIREAYLPELSVIPGVNAAIFEELEGRIFTAFSLYDARNVIKNGDFNNGLSCWNVKGHVDVEEQNNQRSVLVVPEWEAEVSQEVRVCPGRGYILRVTAYKEGYGEGCVTIHEIENNTDELKFSNCVEEEIYPNNTVTCNDYTVNQEEYGGAYTSRNRGYNEAPSVPADYASVYEEKSYTDGRRENPCEFNRGYRDYTPLPVGYVTKELEYFPETDKVWIEIGETEGTFIVDSVELLLMEE</sequence>
<feature type="chain" id="PRO_0000174024" description="Pesticidal crystal protein Cry1Ac">
    <location>
        <begin position="1"/>
        <end position="1178"/>
    </location>
</feature>
<feature type="helix" evidence="2">
    <location>
        <begin position="35"/>
        <end position="48"/>
    </location>
</feature>
<feature type="strand" evidence="2">
    <location>
        <begin position="51"/>
        <end position="53"/>
    </location>
</feature>
<feature type="helix" evidence="2">
    <location>
        <begin position="54"/>
        <end position="63"/>
    </location>
</feature>
<feature type="turn" evidence="3">
    <location>
        <begin position="64"/>
        <end position="67"/>
    </location>
</feature>
<feature type="helix" evidence="2">
    <location>
        <begin position="71"/>
        <end position="84"/>
    </location>
</feature>
<feature type="helix" evidence="2">
    <location>
        <begin position="90"/>
        <end position="119"/>
    </location>
</feature>
<feature type="helix" evidence="2">
    <location>
        <begin position="124"/>
        <end position="144"/>
    </location>
</feature>
<feature type="helix" evidence="2">
    <location>
        <begin position="145"/>
        <end position="148"/>
    </location>
</feature>
<feature type="turn" evidence="2">
    <location>
        <begin position="154"/>
        <end position="157"/>
    </location>
</feature>
<feature type="helix" evidence="2">
    <location>
        <begin position="158"/>
        <end position="182"/>
    </location>
</feature>
<feature type="helix" evidence="2">
    <location>
        <begin position="186"/>
        <end position="217"/>
    </location>
</feature>
<feature type="helix" evidence="2">
    <location>
        <begin position="223"/>
        <end position="239"/>
    </location>
</feature>
<feature type="helix" evidence="2">
    <location>
        <begin position="241"/>
        <end position="244"/>
    </location>
</feature>
<feature type="helix" evidence="2">
    <location>
        <begin position="245"/>
        <end position="250"/>
    </location>
</feature>
<feature type="turn" evidence="2">
    <location>
        <begin position="252"/>
        <end position="254"/>
    </location>
</feature>
<feature type="strand" evidence="2">
    <location>
        <begin position="266"/>
        <end position="269"/>
    </location>
</feature>
<feature type="helix" evidence="2">
    <location>
        <begin position="271"/>
        <end position="274"/>
    </location>
</feature>
<feature type="helix" evidence="2">
    <location>
        <begin position="284"/>
        <end position="289"/>
    </location>
</feature>
<feature type="strand" evidence="2">
    <location>
        <begin position="298"/>
        <end position="310"/>
    </location>
</feature>
<feature type="strand" evidence="2">
    <location>
        <begin position="313"/>
        <end position="325"/>
    </location>
</feature>
<feature type="helix" evidence="2">
    <location>
        <begin position="326"/>
        <end position="328"/>
    </location>
</feature>
<feature type="strand" evidence="2">
    <location>
        <begin position="344"/>
        <end position="351"/>
    </location>
</feature>
<feature type="strand" evidence="2">
    <location>
        <begin position="358"/>
        <end position="368"/>
    </location>
</feature>
<feature type="strand" evidence="2">
    <location>
        <begin position="379"/>
        <end position="390"/>
    </location>
</feature>
<feature type="strand" evidence="2">
    <location>
        <begin position="399"/>
        <end position="402"/>
    </location>
</feature>
<feature type="strand" evidence="2">
    <location>
        <begin position="406"/>
        <end position="408"/>
    </location>
</feature>
<feature type="helix" evidence="2">
    <location>
        <begin position="409"/>
        <end position="411"/>
    </location>
</feature>
<feature type="strand" evidence="3">
    <location>
        <begin position="418"/>
        <end position="420"/>
    </location>
</feature>
<feature type="helix" evidence="2">
    <location>
        <begin position="422"/>
        <end position="425"/>
    </location>
</feature>
<feature type="strand" evidence="2">
    <location>
        <begin position="428"/>
        <end position="438"/>
    </location>
</feature>
<feature type="turn" evidence="2">
    <location>
        <begin position="441"/>
        <end position="443"/>
    </location>
</feature>
<feature type="strand" evidence="2">
    <location>
        <begin position="445"/>
        <end position="457"/>
    </location>
</feature>
<feature type="strand" evidence="2">
    <location>
        <begin position="468"/>
        <end position="475"/>
    </location>
</feature>
<feature type="helix" evidence="2">
    <location>
        <begin position="476"/>
        <end position="478"/>
    </location>
</feature>
<feature type="strand" evidence="2">
    <location>
        <begin position="480"/>
        <end position="488"/>
    </location>
</feature>
<feature type="strand" evidence="2">
    <location>
        <begin position="492"/>
        <end position="496"/>
    </location>
</feature>
<feature type="strand" evidence="2">
    <location>
        <begin position="498"/>
        <end position="501"/>
    </location>
</feature>
<feature type="helix" evidence="2">
    <location>
        <begin position="508"/>
        <end position="510"/>
    </location>
</feature>
<feature type="strand" evidence="2">
    <location>
        <begin position="513"/>
        <end position="517"/>
    </location>
</feature>
<feature type="strand" evidence="2">
    <location>
        <begin position="527"/>
        <end position="534"/>
    </location>
</feature>
<feature type="strand" evidence="2">
    <location>
        <begin position="539"/>
        <end position="545"/>
    </location>
</feature>
<feature type="strand" evidence="2">
    <location>
        <begin position="548"/>
        <end position="555"/>
    </location>
</feature>
<feature type="strand" evidence="2">
    <location>
        <begin position="562"/>
        <end position="564"/>
    </location>
</feature>
<feature type="helix" evidence="2">
    <location>
        <begin position="567"/>
        <end position="569"/>
    </location>
</feature>
<feature type="strand" evidence="2">
    <location>
        <begin position="571"/>
        <end position="574"/>
    </location>
</feature>
<feature type="helix" evidence="2">
    <location>
        <begin position="581"/>
        <end position="583"/>
    </location>
</feature>
<feature type="strand" evidence="2">
    <location>
        <begin position="585"/>
        <end position="591"/>
    </location>
</feature>
<feature type="strand" evidence="2">
    <location>
        <begin position="598"/>
        <end position="607"/>
    </location>
</feature>
<feature type="helix" evidence="3">
    <location>
        <begin position="610"/>
        <end position="626"/>
    </location>
</feature>
<feature type="strand" evidence="3">
    <location>
        <begin position="629"/>
        <end position="631"/>
    </location>
</feature>
<feature type="helix" evidence="3">
    <location>
        <begin position="643"/>
        <end position="654"/>
    </location>
</feature>
<feature type="turn" evidence="3">
    <location>
        <begin position="658"/>
        <end position="660"/>
    </location>
</feature>
<feature type="helix" evidence="3">
    <location>
        <begin position="662"/>
        <end position="682"/>
    </location>
</feature>
<feature type="strand" evidence="3">
    <location>
        <begin position="705"/>
        <end position="711"/>
    </location>
</feature>
<feature type="strand" evidence="3">
    <location>
        <begin position="720"/>
        <end position="724"/>
    </location>
</feature>
<feature type="strand" evidence="3">
    <location>
        <begin position="733"/>
        <end position="739"/>
    </location>
</feature>
<feature type="helix" evidence="3">
    <location>
        <begin position="741"/>
        <end position="743"/>
    </location>
</feature>
<feature type="strand" evidence="3">
    <location>
        <begin position="746"/>
        <end position="778"/>
    </location>
</feature>
<feature type="strand" evidence="3">
    <location>
        <begin position="827"/>
        <end position="834"/>
    </location>
</feature>
<feature type="turn" evidence="3">
    <location>
        <begin position="840"/>
        <end position="842"/>
    </location>
</feature>
<feature type="strand" evidence="3">
    <location>
        <begin position="846"/>
        <end position="852"/>
    </location>
</feature>
<feature type="strand" evidence="3">
    <location>
        <begin position="854"/>
        <end position="856"/>
    </location>
</feature>
<feature type="strand" evidence="3">
    <location>
        <begin position="858"/>
        <end position="871"/>
    </location>
</feature>
<feature type="helix" evidence="3">
    <location>
        <begin position="874"/>
        <end position="910"/>
    </location>
</feature>
<feature type="turn" evidence="3">
    <location>
        <begin position="917"/>
        <end position="919"/>
    </location>
</feature>
<feature type="helix" evidence="3">
    <location>
        <begin position="927"/>
        <end position="937"/>
    </location>
</feature>
<feature type="helix" evidence="3">
    <location>
        <begin position="956"/>
        <end position="976"/>
    </location>
</feature>
<feature type="turn" evidence="3">
    <location>
        <begin position="985"/>
        <end position="990"/>
    </location>
</feature>
<feature type="strand" evidence="3">
    <location>
        <begin position="998"/>
        <end position="1003"/>
    </location>
</feature>
<feature type="strand" evidence="3">
    <location>
        <begin position="1006"/>
        <end position="1011"/>
    </location>
</feature>
<feature type="strand" evidence="3">
    <location>
        <begin position="1018"/>
        <end position="1023"/>
    </location>
</feature>
<feature type="strand" evidence="3">
    <location>
        <begin position="1030"/>
        <end position="1049"/>
    </location>
</feature>
<feature type="strand" evidence="3">
    <location>
        <begin position="1051"/>
        <end position="1053"/>
    </location>
</feature>
<feature type="strand" evidence="3">
    <location>
        <begin position="1056"/>
        <end position="1061"/>
    </location>
</feature>
<feature type="strand" evidence="3">
    <location>
        <begin position="1142"/>
        <end position="1148"/>
    </location>
</feature>
<feature type="strand" evidence="3">
    <location>
        <begin position="1151"/>
        <end position="1175"/>
    </location>
</feature>
<geneLocation type="plasmid">
    <name>75 Kb</name>
</geneLocation>
<dbReference type="EMBL" id="M11068">
    <property type="protein sequence ID" value="AAA22331.1"/>
    <property type="molecule type" value="Genomic_DNA"/>
</dbReference>
<dbReference type="EMBL" id="U87397">
    <property type="protein sequence ID" value="AAC44841.1"/>
    <property type="molecule type" value="Genomic_DNA"/>
</dbReference>
<dbReference type="EMBL" id="U87793">
    <property type="protein sequence ID" value="AAB46989.1"/>
    <property type="molecule type" value="Genomic_DNA"/>
</dbReference>
<dbReference type="EMBL" id="U89872">
    <property type="protein sequence ID" value="AAB49768.1"/>
    <property type="molecule type" value="Genomic_DNA"/>
</dbReference>
<dbReference type="EMBL" id="AJ002514">
    <property type="protein sequence ID" value="CAA05505.1"/>
    <property type="molecule type" value="Genomic_DNA"/>
</dbReference>
<dbReference type="PIR" id="A23962">
    <property type="entry name" value="USBSXH"/>
</dbReference>
<dbReference type="RefSeq" id="WP_000369821.1">
    <property type="nucleotide sequence ID" value="NZ_PHSM01000059.1"/>
</dbReference>
<dbReference type="PDB" id="4ARX">
    <property type="method" value="X-ray"/>
    <property type="resolution" value="2.35 A"/>
    <property type="chains" value="A/B/C/D=31-609"/>
</dbReference>
<dbReference type="PDB" id="4ARY">
    <property type="method" value="X-ray"/>
    <property type="resolution" value="2.95 A"/>
    <property type="chains" value="A/B/C/D=31-611"/>
</dbReference>
<dbReference type="PDB" id="4W8J">
    <property type="method" value="X-ray"/>
    <property type="resolution" value="2.78 A"/>
    <property type="chains" value="A=1-1178"/>
</dbReference>
<dbReference type="PDBsum" id="4ARX"/>
<dbReference type="PDBsum" id="4ARY"/>
<dbReference type="PDBsum" id="4W8J"/>
<dbReference type="SMR" id="P05068"/>
<dbReference type="ABCD" id="P05068">
    <property type="antibodies" value="7 sequenced antibodies"/>
</dbReference>
<dbReference type="EvolutionaryTrace" id="P05068"/>
<dbReference type="GO" id="GO:0005102">
    <property type="term" value="F:signaling receptor binding"/>
    <property type="evidence" value="ECO:0007669"/>
    <property type="project" value="InterPro"/>
</dbReference>
<dbReference type="GO" id="GO:0090729">
    <property type="term" value="F:toxin activity"/>
    <property type="evidence" value="ECO:0007669"/>
    <property type="project" value="UniProtKB-KW"/>
</dbReference>
<dbReference type="GO" id="GO:0030435">
    <property type="term" value="P:sporulation resulting in formation of a cellular spore"/>
    <property type="evidence" value="ECO:0007669"/>
    <property type="project" value="UniProtKB-KW"/>
</dbReference>
<dbReference type="GO" id="GO:0001907">
    <property type="term" value="P:symbiont-mediated killing of host cell"/>
    <property type="evidence" value="ECO:0007669"/>
    <property type="project" value="InterPro"/>
</dbReference>
<dbReference type="CDD" id="cd04085">
    <property type="entry name" value="delta_endotoxin_C"/>
    <property type="match status" value="1"/>
</dbReference>
<dbReference type="Gene3D" id="2.60.120.260">
    <property type="entry name" value="Galactose-binding domain-like"/>
    <property type="match status" value="2"/>
</dbReference>
<dbReference type="Gene3D" id="2.100.10.10">
    <property type="entry name" value="Pesticidal crystal protein, central domain"/>
    <property type="match status" value="1"/>
</dbReference>
<dbReference type="Gene3D" id="1.20.190.10">
    <property type="entry name" value="Pesticidal crystal protein, N-terminal domain"/>
    <property type="match status" value="1"/>
</dbReference>
<dbReference type="InterPro" id="IPR048645">
    <property type="entry name" value="Cry1Ac-like_dom-VII"/>
</dbReference>
<dbReference type="InterPro" id="IPR041587">
    <property type="entry name" value="Cry_V"/>
</dbReference>
<dbReference type="InterPro" id="IPR008979">
    <property type="entry name" value="Galactose-bd-like_sf"/>
</dbReference>
<dbReference type="InterPro" id="IPR038979">
    <property type="entry name" value="Pest_crys"/>
</dbReference>
<dbReference type="InterPro" id="IPR005638">
    <property type="entry name" value="Pest_crys_dom-III"/>
</dbReference>
<dbReference type="InterPro" id="IPR005639">
    <property type="entry name" value="Pest_crys_dom_I"/>
</dbReference>
<dbReference type="InterPro" id="IPR036716">
    <property type="entry name" value="Pest_crys_N_sf"/>
</dbReference>
<dbReference type="InterPro" id="IPR036399">
    <property type="entry name" value="Pest_cryst_cen_dom_sf"/>
</dbReference>
<dbReference type="InterPro" id="IPR001178">
    <property type="entry name" value="Pest_cryst_dom_II"/>
</dbReference>
<dbReference type="PANTHER" id="PTHR37003">
    <property type="entry name" value="ENDOTOXIN_N DOMAIN-CONTAINING PROTEIN-RELATED"/>
    <property type="match status" value="1"/>
</dbReference>
<dbReference type="PANTHER" id="PTHR37003:SF2">
    <property type="entry name" value="PESTICIDAL CRYSTAL PROTEIN N-TERMINAL DOMAIN-CONTAINING PROTEIN"/>
    <property type="match status" value="1"/>
</dbReference>
<dbReference type="Pfam" id="PF17997">
    <property type="entry name" value="Cry1Ac_D5"/>
    <property type="match status" value="1"/>
</dbReference>
<dbReference type="Pfam" id="PF21463">
    <property type="entry name" value="Cry1Ac_dom-VII"/>
    <property type="match status" value="1"/>
</dbReference>
<dbReference type="Pfam" id="PF03944">
    <property type="entry name" value="Endotoxin_C"/>
    <property type="match status" value="1"/>
</dbReference>
<dbReference type="Pfam" id="PF00555">
    <property type="entry name" value="Endotoxin_M"/>
    <property type="match status" value="1"/>
</dbReference>
<dbReference type="Pfam" id="PF03945">
    <property type="entry name" value="Endotoxin_N"/>
    <property type="match status" value="1"/>
</dbReference>
<dbReference type="SUPFAM" id="SSF51096">
    <property type="entry name" value="delta-Endotoxin (insectocide), middle domain"/>
    <property type="match status" value="1"/>
</dbReference>
<dbReference type="SUPFAM" id="SSF56849">
    <property type="entry name" value="delta-Endotoxin (insectocide), N-terminal domain"/>
    <property type="match status" value="1"/>
</dbReference>
<dbReference type="SUPFAM" id="SSF49785">
    <property type="entry name" value="Galactose-binding domain-like"/>
    <property type="match status" value="1"/>
</dbReference>
<evidence type="ECO:0000305" key="1"/>
<evidence type="ECO:0007829" key="2">
    <source>
        <dbReference type="PDB" id="4ARX"/>
    </source>
</evidence>
<evidence type="ECO:0007829" key="3">
    <source>
        <dbReference type="PDB" id="4W8J"/>
    </source>
</evidence>
<organism>
    <name type="scientific">Bacillus thuringiensis subsp. kurstaki</name>
    <dbReference type="NCBI Taxonomy" id="29339"/>
    <lineage>
        <taxon>Bacteria</taxon>
        <taxon>Bacillati</taxon>
        <taxon>Bacillota</taxon>
        <taxon>Bacilli</taxon>
        <taxon>Bacillales</taxon>
        <taxon>Bacillaceae</taxon>
        <taxon>Bacillus</taxon>
        <taxon>Bacillus cereus group</taxon>
    </lineage>
</organism>